<proteinExistence type="inferred from homology"/>
<reference key="1">
    <citation type="submission" date="2007-10" db="EMBL/GenBank/DDBJ databases">
        <title>Complete sequence of Desulfococcus oleovorans Hxd3.</title>
        <authorList>
            <consortium name="US DOE Joint Genome Institute"/>
            <person name="Copeland A."/>
            <person name="Lucas S."/>
            <person name="Lapidus A."/>
            <person name="Barry K."/>
            <person name="Glavina del Rio T."/>
            <person name="Dalin E."/>
            <person name="Tice H."/>
            <person name="Pitluck S."/>
            <person name="Kiss H."/>
            <person name="Brettin T."/>
            <person name="Bruce D."/>
            <person name="Detter J.C."/>
            <person name="Han C."/>
            <person name="Schmutz J."/>
            <person name="Larimer F."/>
            <person name="Land M."/>
            <person name="Hauser L."/>
            <person name="Kyrpides N."/>
            <person name="Kim E."/>
            <person name="Wawrik B."/>
            <person name="Richardson P."/>
        </authorList>
    </citation>
    <scope>NUCLEOTIDE SEQUENCE [LARGE SCALE GENOMIC DNA]</scope>
    <source>
        <strain>DSM 6200 / JCM 39069 / Hxd3</strain>
    </source>
</reference>
<comment type="function">
    <text evidence="1">Catalyzes the attachment of glutamate to tRNA(Glu) in a two-step reaction: glutamate is first activated by ATP to form Glu-AMP and then transferred to the acceptor end of tRNA(Glu).</text>
</comment>
<comment type="catalytic activity">
    <reaction evidence="1">
        <text>tRNA(Glu) + L-glutamate + ATP = L-glutamyl-tRNA(Glu) + AMP + diphosphate</text>
        <dbReference type="Rhea" id="RHEA:23540"/>
        <dbReference type="Rhea" id="RHEA-COMP:9663"/>
        <dbReference type="Rhea" id="RHEA-COMP:9680"/>
        <dbReference type="ChEBI" id="CHEBI:29985"/>
        <dbReference type="ChEBI" id="CHEBI:30616"/>
        <dbReference type="ChEBI" id="CHEBI:33019"/>
        <dbReference type="ChEBI" id="CHEBI:78442"/>
        <dbReference type="ChEBI" id="CHEBI:78520"/>
        <dbReference type="ChEBI" id="CHEBI:456215"/>
        <dbReference type="EC" id="6.1.1.17"/>
    </reaction>
</comment>
<comment type="cofactor">
    <cofactor evidence="1">
        <name>Zn(2+)</name>
        <dbReference type="ChEBI" id="CHEBI:29105"/>
    </cofactor>
    <text evidence="1">Binds 1 zinc ion per subunit.</text>
</comment>
<comment type="subunit">
    <text evidence="1">Monomer.</text>
</comment>
<comment type="subcellular location">
    <subcellularLocation>
        <location evidence="1">Cytoplasm</location>
    </subcellularLocation>
</comment>
<comment type="similarity">
    <text evidence="1">Belongs to the class-I aminoacyl-tRNA synthetase family. Glutamate--tRNA ligase type 1 subfamily.</text>
</comment>
<name>SYE_DESOH</name>
<evidence type="ECO:0000255" key="1">
    <source>
        <dbReference type="HAMAP-Rule" id="MF_00022"/>
    </source>
</evidence>
<feature type="chain" id="PRO_0000367663" description="Glutamate--tRNA ligase">
    <location>
        <begin position="1"/>
        <end position="467"/>
    </location>
</feature>
<feature type="short sequence motif" description="'HIGH' region" evidence="1">
    <location>
        <begin position="10"/>
        <end position="20"/>
    </location>
</feature>
<feature type="short sequence motif" description="'KMSKS' region" evidence="1">
    <location>
        <begin position="236"/>
        <end position="240"/>
    </location>
</feature>
<feature type="binding site" evidence="1">
    <location>
        <position position="99"/>
    </location>
    <ligand>
        <name>Zn(2+)</name>
        <dbReference type="ChEBI" id="CHEBI:29105"/>
    </ligand>
</feature>
<feature type="binding site" evidence="1">
    <location>
        <position position="101"/>
    </location>
    <ligand>
        <name>Zn(2+)</name>
        <dbReference type="ChEBI" id="CHEBI:29105"/>
    </ligand>
</feature>
<feature type="binding site" evidence="1">
    <location>
        <position position="126"/>
    </location>
    <ligand>
        <name>Zn(2+)</name>
        <dbReference type="ChEBI" id="CHEBI:29105"/>
    </ligand>
</feature>
<feature type="binding site" evidence="1">
    <location>
        <position position="128"/>
    </location>
    <ligand>
        <name>Zn(2+)</name>
        <dbReference type="ChEBI" id="CHEBI:29105"/>
    </ligand>
</feature>
<feature type="binding site" evidence="1">
    <location>
        <position position="239"/>
    </location>
    <ligand>
        <name>ATP</name>
        <dbReference type="ChEBI" id="CHEBI:30616"/>
    </ligand>
</feature>
<accession>A8ZWA3</accession>
<sequence>MKQIITRFPPSPTGHLHIGGARTALFNWLYARHTGGRFILRIEDTDVERSTTQSAEGIIKSLEWLGIDWDEGPYFQSRRMEVYAEYIQRLLASGHAYYCTCSPERLKERRERALAEGRNPTYDGTCREKALPPSDDAVVRFRTPDTGKTVLDDRVKGGIAFDNAEIGDFIIQRSDQTPTYNFAVVVDDITMGINTIIRGDDHVTNTPRQILMYRALDSELPLFAHVPMVLGRDRSRLSKRHGAMSVLEYRDTGYLPDGLINALVRLGWSHGDQEFFTRKELIELFSLEHIGTSAGVFDPDKLLAINAEHIKKSDPAALAPHLLPLLKEKGYAAENNDYLHNAIHTLLLRSKTLKEMADKAAFYYEDPLSYDPAATAKFLVPENMEILEMLAEKLATLDSLTEKDQEPAFTAVMEKTGKKFGKIAQPVRVALTGRTESPGIFETIEALGRRKTLERLADAVEMIKKST</sequence>
<dbReference type="EC" id="6.1.1.17" evidence="1"/>
<dbReference type="EMBL" id="CP000859">
    <property type="protein sequence ID" value="ABW68337.1"/>
    <property type="molecule type" value="Genomic_DNA"/>
</dbReference>
<dbReference type="RefSeq" id="WP_012175949.1">
    <property type="nucleotide sequence ID" value="NC_009943.1"/>
</dbReference>
<dbReference type="SMR" id="A8ZWA3"/>
<dbReference type="STRING" id="96561.Dole_2533"/>
<dbReference type="KEGG" id="dol:Dole_2533"/>
<dbReference type="eggNOG" id="COG0008">
    <property type="taxonomic scope" value="Bacteria"/>
</dbReference>
<dbReference type="HOGENOM" id="CLU_015768_6_3_7"/>
<dbReference type="OrthoDB" id="9807503at2"/>
<dbReference type="Proteomes" id="UP000008561">
    <property type="component" value="Chromosome"/>
</dbReference>
<dbReference type="GO" id="GO:0005829">
    <property type="term" value="C:cytosol"/>
    <property type="evidence" value="ECO:0007669"/>
    <property type="project" value="TreeGrafter"/>
</dbReference>
<dbReference type="GO" id="GO:0005524">
    <property type="term" value="F:ATP binding"/>
    <property type="evidence" value="ECO:0007669"/>
    <property type="project" value="UniProtKB-UniRule"/>
</dbReference>
<dbReference type="GO" id="GO:0004818">
    <property type="term" value="F:glutamate-tRNA ligase activity"/>
    <property type="evidence" value="ECO:0007669"/>
    <property type="project" value="UniProtKB-UniRule"/>
</dbReference>
<dbReference type="GO" id="GO:0000049">
    <property type="term" value="F:tRNA binding"/>
    <property type="evidence" value="ECO:0007669"/>
    <property type="project" value="InterPro"/>
</dbReference>
<dbReference type="GO" id="GO:0008270">
    <property type="term" value="F:zinc ion binding"/>
    <property type="evidence" value="ECO:0007669"/>
    <property type="project" value="UniProtKB-UniRule"/>
</dbReference>
<dbReference type="GO" id="GO:0006424">
    <property type="term" value="P:glutamyl-tRNA aminoacylation"/>
    <property type="evidence" value="ECO:0007669"/>
    <property type="project" value="UniProtKB-UniRule"/>
</dbReference>
<dbReference type="CDD" id="cd00808">
    <property type="entry name" value="GluRS_core"/>
    <property type="match status" value="1"/>
</dbReference>
<dbReference type="FunFam" id="3.40.50.620:FF:000007">
    <property type="entry name" value="Glutamate--tRNA ligase"/>
    <property type="match status" value="1"/>
</dbReference>
<dbReference type="Gene3D" id="1.10.10.350">
    <property type="match status" value="1"/>
</dbReference>
<dbReference type="Gene3D" id="3.40.50.620">
    <property type="entry name" value="HUPs"/>
    <property type="match status" value="1"/>
</dbReference>
<dbReference type="HAMAP" id="MF_00022">
    <property type="entry name" value="Glu_tRNA_synth_type1"/>
    <property type="match status" value="1"/>
</dbReference>
<dbReference type="InterPro" id="IPR045462">
    <property type="entry name" value="aa-tRNA-synth_I_cd-bd"/>
</dbReference>
<dbReference type="InterPro" id="IPR020751">
    <property type="entry name" value="aa-tRNA-synth_I_codon-bd_sub2"/>
</dbReference>
<dbReference type="InterPro" id="IPR001412">
    <property type="entry name" value="aa-tRNA-synth_I_CS"/>
</dbReference>
<dbReference type="InterPro" id="IPR008925">
    <property type="entry name" value="aa_tRNA-synth_I_cd-bd_sf"/>
</dbReference>
<dbReference type="InterPro" id="IPR004527">
    <property type="entry name" value="Glu-tRNA-ligase_bac/mito"/>
</dbReference>
<dbReference type="InterPro" id="IPR000924">
    <property type="entry name" value="Glu/Gln-tRNA-synth"/>
</dbReference>
<dbReference type="InterPro" id="IPR020058">
    <property type="entry name" value="Glu/Gln-tRNA-synth_Ib_cat-dom"/>
</dbReference>
<dbReference type="InterPro" id="IPR049940">
    <property type="entry name" value="GluQ/Sye"/>
</dbReference>
<dbReference type="InterPro" id="IPR033910">
    <property type="entry name" value="GluRS_core"/>
</dbReference>
<dbReference type="InterPro" id="IPR014729">
    <property type="entry name" value="Rossmann-like_a/b/a_fold"/>
</dbReference>
<dbReference type="NCBIfam" id="TIGR00464">
    <property type="entry name" value="gltX_bact"/>
    <property type="match status" value="1"/>
</dbReference>
<dbReference type="PANTHER" id="PTHR43311">
    <property type="entry name" value="GLUTAMATE--TRNA LIGASE"/>
    <property type="match status" value="1"/>
</dbReference>
<dbReference type="PANTHER" id="PTHR43311:SF2">
    <property type="entry name" value="GLUTAMATE--TRNA LIGASE, MITOCHONDRIAL-RELATED"/>
    <property type="match status" value="1"/>
</dbReference>
<dbReference type="Pfam" id="PF19269">
    <property type="entry name" value="Anticodon_2"/>
    <property type="match status" value="1"/>
</dbReference>
<dbReference type="Pfam" id="PF00749">
    <property type="entry name" value="tRNA-synt_1c"/>
    <property type="match status" value="1"/>
</dbReference>
<dbReference type="PRINTS" id="PR00987">
    <property type="entry name" value="TRNASYNTHGLU"/>
</dbReference>
<dbReference type="SUPFAM" id="SSF48163">
    <property type="entry name" value="An anticodon-binding domain of class I aminoacyl-tRNA synthetases"/>
    <property type="match status" value="1"/>
</dbReference>
<dbReference type="SUPFAM" id="SSF52374">
    <property type="entry name" value="Nucleotidylyl transferase"/>
    <property type="match status" value="1"/>
</dbReference>
<dbReference type="PROSITE" id="PS00178">
    <property type="entry name" value="AA_TRNA_LIGASE_I"/>
    <property type="match status" value="1"/>
</dbReference>
<organism>
    <name type="scientific">Desulfosudis oleivorans (strain DSM 6200 / JCM 39069 / Hxd3)</name>
    <name type="common">Desulfococcus oleovorans</name>
    <dbReference type="NCBI Taxonomy" id="96561"/>
    <lineage>
        <taxon>Bacteria</taxon>
        <taxon>Pseudomonadati</taxon>
        <taxon>Thermodesulfobacteriota</taxon>
        <taxon>Desulfobacteria</taxon>
        <taxon>Desulfobacterales</taxon>
        <taxon>Desulfosudaceae</taxon>
        <taxon>Desulfosudis</taxon>
    </lineage>
</organism>
<gene>
    <name evidence="1" type="primary">gltX</name>
    <name type="ordered locus">Dole_2533</name>
</gene>
<protein>
    <recommendedName>
        <fullName evidence="1">Glutamate--tRNA ligase</fullName>
        <ecNumber evidence="1">6.1.1.17</ecNumber>
    </recommendedName>
    <alternativeName>
        <fullName evidence="1">Glutamyl-tRNA synthetase</fullName>
        <shortName evidence="1">GluRS</shortName>
    </alternativeName>
</protein>
<keyword id="KW-0030">Aminoacyl-tRNA synthetase</keyword>
<keyword id="KW-0067">ATP-binding</keyword>
<keyword id="KW-0963">Cytoplasm</keyword>
<keyword id="KW-0436">Ligase</keyword>
<keyword id="KW-0479">Metal-binding</keyword>
<keyword id="KW-0547">Nucleotide-binding</keyword>
<keyword id="KW-0648">Protein biosynthesis</keyword>
<keyword id="KW-1185">Reference proteome</keyword>
<keyword id="KW-0862">Zinc</keyword>